<reference key="1">
    <citation type="journal article" date="2002" name="Science">
        <title>50 million years of genomic stasis in endosymbiotic bacteria.</title>
        <authorList>
            <person name="Tamas I."/>
            <person name="Klasson L."/>
            <person name="Canbaeck B."/>
            <person name="Naeslund A.K."/>
            <person name="Eriksson A.-S."/>
            <person name="Wernegreen J.J."/>
            <person name="Sandstroem J.P."/>
            <person name="Moran N.A."/>
            <person name="Andersson S.G.E."/>
        </authorList>
    </citation>
    <scope>NUCLEOTIDE SEQUENCE [LARGE SCALE GENOMIC DNA]</scope>
    <source>
        <strain>Sg</strain>
    </source>
</reference>
<protein>
    <recommendedName>
        <fullName evidence="1">Transcription termination/antitermination protein NusA</fullName>
    </recommendedName>
</protein>
<name>NUSA_BUCAP</name>
<evidence type="ECO:0000255" key="1">
    <source>
        <dbReference type="HAMAP-Rule" id="MF_00945"/>
    </source>
</evidence>
<proteinExistence type="inferred from homology"/>
<dbReference type="EMBL" id="AE013218">
    <property type="protein sequence ID" value="AAM67919.1"/>
    <property type="molecule type" value="Genomic_DNA"/>
</dbReference>
<dbReference type="RefSeq" id="WP_011053886.1">
    <property type="nucleotide sequence ID" value="NC_004061.1"/>
</dbReference>
<dbReference type="SMR" id="Q8K9H0"/>
<dbReference type="STRING" id="198804.BUsg_366"/>
<dbReference type="GeneID" id="93003836"/>
<dbReference type="KEGG" id="bas:BUsg_366"/>
<dbReference type="eggNOG" id="COG0195">
    <property type="taxonomic scope" value="Bacteria"/>
</dbReference>
<dbReference type="HOGENOM" id="CLU_029242_0_0_6"/>
<dbReference type="Proteomes" id="UP000000416">
    <property type="component" value="Chromosome"/>
</dbReference>
<dbReference type="GO" id="GO:0005829">
    <property type="term" value="C:cytosol"/>
    <property type="evidence" value="ECO:0007669"/>
    <property type="project" value="TreeGrafter"/>
</dbReference>
<dbReference type="GO" id="GO:0003700">
    <property type="term" value="F:DNA-binding transcription factor activity"/>
    <property type="evidence" value="ECO:0007669"/>
    <property type="project" value="InterPro"/>
</dbReference>
<dbReference type="GO" id="GO:0000166">
    <property type="term" value="F:nucleotide binding"/>
    <property type="evidence" value="ECO:0007669"/>
    <property type="project" value="InterPro"/>
</dbReference>
<dbReference type="GO" id="GO:0003723">
    <property type="term" value="F:RNA binding"/>
    <property type="evidence" value="ECO:0007669"/>
    <property type="project" value="UniProtKB-UniRule"/>
</dbReference>
<dbReference type="GO" id="GO:0006353">
    <property type="term" value="P:DNA-templated transcription termination"/>
    <property type="evidence" value="ECO:0007669"/>
    <property type="project" value="UniProtKB-UniRule"/>
</dbReference>
<dbReference type="GO" id="GO:0031564">
    <property type="term" value="P:transcription antitermination"/>
    <property type="evidence" value="ECO:0007669"/>
    <property type="project" value="UniProtKB-UniRule"/>
</dbReference>
<dbReference type="CDD" id="cd02134">
    <property type="entry name" value="KH-II_NusA_rpt1"/>
    <property type="match status" value="1"/>
</dbReference>
<dbReference type="CDD" id="cd22529">
    <property type="entry name" value="KH-II_NusA_rpt2"/>
    <property type="match status" value="1"/>
</dbReference>
<dbReference type="CDD" id="cd04455">
    <property type="entry name" value="S1_NusA"/>
    <property type="match status" value="1"/>
</dbReference>
<dbReference type="FunFam" id="1.10.150.20:FF:000015">
    <property type="entry name" value="Transcription termination/antitermination protein NusA"/>
    <property type="match status" value="1"/>
</dbReference>
<dbReference type="FunFam" id="3.30.1480.10:FF:000001">
    <property type="entry name" value="Transcription termination/antitermination protein NusA"/>
    <property type="match status" value="1"/>
</dbReference>
<dbReference type="FunFam" id="3.30.300.20:FF:000002">
    <property type="entry name" value="Transcription termination/antitermination protein NusA"/>
    <property type="match status" value="1"/>
</dbReference>
<dbReference type="FunFam" id="3.30.300.20:FF:000005">
    <property type="entry name" value="Transcription termination/antitermination protein NusA"/>
    <property type="match status" value="1"/>
</dbReference>
<dbReference type="Gene3D" id="3.30.300.20">
    <property type="match status" value="2"/>
</dbReference>
<dbReference type="Gene3D" id="1.10.150.20">
    <property type="entry name" value="5' to 3' exonuclease, C-terminal subdomain"/>
    <property type="match status" value="2"/>
</dbReference>
<dbReference type="Gene3D" id="2.40.50.140">
    <property type="entry name" value="Nucleic acid-binding proteins"/>
    <property type="match status" value="1"/>
</dbReference>
<dbReference type="Gene3D" id="3.30.1480.10">
    <property type="entry name" value="NusA, N-terminal domain"/>
    <property type="match status" value="1"/>
</dbReference>
<dbReference type="HAMAP" id="MF_00945_B">
    <property type="entry name" value="NusA_B"/>
    <property type="match status" value="1"/>
</dbReference>
<dbReference type="InterPro" id="IPR010995">
    <property type="entry name" value="DNA_repair_Rad51/TF_NusA_a-hlx"/>
</dbReference>
<dbReference type="InterPro" id="IPR004087">
    <property type="entry name" value="KH_dom"/>
</dbReference>
<dbReference type="InterPro" id="IPR015946">
    <property type="entry name" value="KH_dom-like_a/b"/>
</dbReference>
<dbReference type="InterPro" id="IPR025249">
    <property type="entry name" value="KH_dom_NusA-like"/>
</dbReference>
<dbReference type="InterPro" id="IPR009019">
    <property type="entry name" value="KH_sf_prok-type"/>
</dbReference>
<dbReference type="InterPro" id="IPR012340">
    <property type="entry name" value="NA-bd_OB-fold"/>
</dbReference>
<dbReference type="InterPro" id="IPR030842">
    <property type="entry name" value="NusA_bac"/>
</dbReference>
<dbReference type="InterPro" id="IPR036555">
    <property type="entry name" value="NusA_N_sf"/>
</dbReference>
<dbReference type="InterPro" id="IPR003029">
    <property type="entry name" value="S1_domain"/>
</dbReference>
<dbReference type="InterPro" id="IPR013735">
    <property type="entry name" value="TF_NusA_N"/>
</dbReference>
<dbReference type="InterPro" id="IPR010214">
    <property type="entry name" value="Tscrpt_termin_fac_NusA_C_rpt"/>
</dbReference>
<dbReference type="InterPro" id="IPR010213">
    <property type="entry name" value="Tscrpt_termination_fac_NusA"/>
</dbReference>
<dbReference type="NCBIfam" id="TIGR01953">
    <property type="entry name" value="NusA"/>
    <property type="match status" value="1"/>
</dbReference>
<dbReference type="NCBIfam" id="TIGR01954">
    <property type="entry name" value="nusA_Cterm_rpt"/>
    <property type="match status" value="2"/>
</dbReference>
<dbReference type="PANTHER" id="PTHR22648">
    <property type="entry name" value="TRANSCRIPTION TERMINATION FACTOR NUSA"/>
    <property type="match status" value="1"/>
</dbReference>
<dbReference type="PANTHER" id="PTHR22648:SF0">
    <property type="entry name" value="TRANSCRIPTION TERMINATION_ANTITERMINATION PROTEIN NUSA"/>
    <property type="match status" value="1"/>
</dbReference>
<dbReference type="Pfam" id="PF14520">
    <property type="entry name" value="HHH_5"/>
    <property type="match status" value="1"/>
</dbReference>
<dbReference type="Pfam" id="PF13184">
    <property type="entry name" value="KH_5"/>
    <property type="match status" value="1"/>
</dbReference>
<dbReference type="Pfam" id="PF08529">
    <property type="entry name" value="NusA_N"/>
    <property type="match status" value="1"/>
</dbReference>
<dbReference type="SMART" id="SM00322">
    <property type="entry name" value="KH"/>
    <property type="match status" value="2"/>
</dbReference>
<dbReference type="SMART" id="SM00316">
    <property type="entry name" value="S1"/>
    <property type="match status" value="1"/>
</dbReference>
<dbReference type="SUPFAM" id="SSF50249">
    <property type="entry name" value="Nucleic acid-binding proteins"/>
    <property type="match status" value="1"/>
</dbReference>
<dbReference type="SUPFAM" id="SSF54814">
    <property type="entry name" value="Prokaryotic type KH domain (KH-domain type II)"/>
    <property type="match status" value="2"/>
</dbReference>
<dbReference type="SUPFAM" id="SSF47794">
    <property type="entry name" value="Rad51 N-terminal domain-like"/>
    <property type="match status" value="2"/>
</dbReference>
<dbReference type="SUPFAM" id="SSF69705">
    <property type="entry name" value="Transcription factor NusA, N-terminal domain"/>
    <property type="match status" value="1"/>
</dbReference>
<dbReference type="PROSITE" id="PS50084">
    <property type="entry name" value="KH_TYPE_1"/>
    <property type="match status" value="1"/>
</dbReference>
<dbReference type="PROSITE" id="PS50126">
    <property type="entry name" value="S1"/>
    <property type="match status" value="1"/>
</dbReference>
<organism>
    <name type="scientific">Buchnera aphidicola subsp. Schizaphis graminum (strain Sg)</name>
    <dbReference type="NCBI Taxonomy" id="198804"/>
    <lineage>
        <taxon>Bacteria</taxon>
        <taxon>Pseudomonadati</taxon>
        <taxon>Pseudomonadota</taxon>
        <taxon>Gammaproteobacteria</taxon>
        <taxon>Enterobacterales</taxon>
        <taxon>Erwiniaceae</taxon>
        <taxon>Buchnera</taxon>
    </lineage>
</organism>
<keyword id="KW-0963">Cytoplasm</keyword>
<keyword id="KW-0677">Repeat</keyword>
<keyword id="KW-0694">RNA-binding</keyword>
<keyword id="KW-0804">Transcription</keyword>
<keyword id="KW-0889">Transcription antitermination</keyword>
<keyword id="KW-0805">Transcription regulation</keyword>
<keyword id="KW-0806">Transcription termination</keyword>
<gene>
    <name evidence="1" type="primary">nusA</name>
    <name type="ordered locus">BUsg_366</name>
</gene>
<comment type="function">
    <text evidence="1">Participates in both transcription termination and antitermination.</text>
</comment>
<comment type="subunit">
    <text evidence="1">Monomer. Binds directly to the core enzyme of the DNA-dependent RNA polymerase and to nascent RNA.</text>
</comment>
<comment type="subcellular location">
    <subcellularLocation>
        <location evidence="1">Cytoplasm</location>
    </subcellularLocation>
</comment>
<comment type="similarity">
    <text evidence="1">Belongs to the NusA family.</text>
</comment>
<feature type="chain" id="PRO_0000181963" description="Transcription termination/antitermination protein NusA">
    <location>
        <begin position="1"/>
        <end position="495"/>
    </location>
</feature>
<feature type="domain" description="S1 motif" evidence="1">
    <location>
        <begin position="135"/>
        <end position="200"/>
    </location>
</feature>
<feature type="domain" description="KH" evidence="1">
    <location>
        <begin position="302"/>
        <end position="370"/>
    </location>
</feature>
<feature type="repeat" description="1">
    <location>
        <begin position="364"/>
        <end position="414"/>
    </location>
</feature>
<feature type="repeat" description="2">
    <location>
        <begin position="439"/>
        <end position="489"/>
    </location>
</feature>
<feature type="region of interest" description="2 X 51 AA approximate repeats" evidence="1">
    <location>
        <begin position="364"/>
        <end position="489"/>
    </location>
</feature>
<sequence>MNKEILAVVEAVSNEKSLPREKIFEALEIALATATKKKYEQEIDVRVSINRKTGNFSTFRRWMVVDIVVHPTKEITLEAACFEGEQVKINDYVEDKIESVNFDRITTQTAKQVIVQKVREAERAMLVDQFRKHIGQIITGIVKKISRDNLTLDLGNNAEALILREGMLPRENFRPGDRIRGILYGVYPEARGAQLFLSRSKTEMLIELFRIEVPEIGEEVIEIKAAARDPGSRAKIAVKTNDKRIDPIGACVGMRGARVQAVSSELCGERIDIILWDDNPAQFVINAMAPADVVSIIVDEDHHTMDIAVDSSNLAQAIGRNGQNVRLASQISGWELNVMTTEDLRSKHKEEAYAAFNIFKKNLNVSEKVIKTLVKEGFSSLEELAYIPLNELLEINNLTEREVQLVREGAKNGLLLLELDQKNQIKNKKIEQALLNVNGMNELLALKLAEKNIFTVEELANQGIDDLIDIENLNSEQAGLLIMAARNICWFSSKV</sequence>
<accession>Q8K9H0</accession>